<dbReference type="EMBL" id="AL137849">
    <property type="status" value="NOT_ANNOTATED_CDS"/>
    <property type="molecule type" value="Genomic_DNA"/>
</dbReference>
<dbReference type="EMBL" id="BC108665">
    <property type="protein sequence ID" value="AAI08666.1"/>
    <property type="molecule type" value="mRNA"/>
</dbReference>
<dbReference type="CCDS" id="CCDS35055.2">
    <molecule id="Q5TBE3-2"/>
</dbReference>
<dbReference type="RefSeq" id="NP_001263295.1">
    <molecule id="Q5TBE3-2"/>
    <property type="nucleotide sequence ID" value="NM_001276366.4"/>
</dbReference>
<dbReference type="RefSeq" id="NP_001263296.1">
    <molecule id="Q5TBE3-2"/>
    <property type="nucleotide sequence ID" value="NM_001276367.4"/>
</dbReference>
<dbReference type="RefSeq" id="NP_001263297.1">
    <molecule id="Q5TBE3-2"/>
    <property type="nucleotide sequence ID" value="NM_001276368.4"/>
</dbReference>
<dbReference type="SMR" id="Q5TBE3"/>
<dbReference type="BioGRID" id="133263">
    <property type="interactions" value="3"/>
</dbReference>
<dbReference type="IntAct" id="Q5TBE3">
    <property type="interactions" value="1"/>
</dbReference>
<dbReference type="STRING" id="9606.ENSP00000344865"/>
<dbReference type="iPTMnet" id="Q5TBE3"/>
<dbReference type="PhosphoSitePlus" id="Q5TBE3"/>
<dbReference type="BioMuta" id="C9orf153"/>
<dbReference type="DMDM" id="74745945"/>
<dbReference type="MassIVE" id="Q5TBE3"/>
<dbReference type="PaxDb" id="9606-ENSP00000344865"/>
<dbReference type="PeptideAtlas" id="Q5TBE3"/>
<dbReference type="Antibodypedia" id="27804">
    <property type="antibodies" value="59 antibodies from 17 providers"/>
</dbReference>
<dbReference type="DNASU" id="389766"/>
<dbReference type="Ensembl" id="ENST00000339137.7">
    <molecule id="Q5TBE3-2"/>
    <property type="protein sequence ID" value="ENSP00000344865.2"/>
    <property type="gene ID" value="ENSG00000187753.13"/>
</dbReference>
<dbReference type="Ensembl" id="ENST00000376001.7">
    <molecule id="Q5TBE3-1"/>
    <property type="protein sequence ID" value="ENSP00000365169.3"/>
    <property type="gene ID" value="ENSG00000187753.13"/>
</dbReference>
<dbReference type="Ensembl" id="ENST00000613665.4">
    <molecule id="Q5TBE3-2"/>
    <property type="protein sequence ID" value="ENSP00000484453.1"/>
    <property type="gene ID" value="ENSG00000187753.13"/>
</dbReference>
<dbReference type="Ensembl" id="ENST00000617985.1">
    <molecule id="Q5TBE3-1"/>
    <property type="protein sequence ID" value="ENSP00000484765.1"/>
    <property type="gene ID" value="ENSG00000187753.13"/>
</dbReference>
<dbReference type="GeneID" id="389766"/>
<dbReference type="KEGG" id="hsa:389766"/>
<dbReference type="MANE-Select" id="ENST00000339137.7">
    <molecule id="Q5TBE3-2"/>
    <property type="protein sequence ID" value="ENSP00000344865.2"/>
    <property type="RefSeq nucleotide sequence ID" value="NM_001276366.4"/>
    <property type="RefSeq protein sequence ID" value="NP_001263295.1"/>
</dbReference>
<dbReference type="UCSC" id="uc031teh.1">
    <molecule id="Q5TBE3-1"/>
    <property type="organism name" value="human"/>
</dbReference>
<dbReference type="AGR" id="HGNC:31456"/>
<dbReference type="CTD" id="389766"/>
<dbReference type="DisGeNET" id="389766"/>
<dbReference type="GeneCards" id="C9orf153"/>
<dbReference type="HGNC" id="HGNC:31456">
    <property type="gene designation" value="C9orf153"/>
</dbReference>
<dbReference type="HPA" id="ENSG00000187753">
    <property type="expression patterns" value="Tissue enriched (testis)"/>
</dbReference>
<dbReference type="neXtProt" id="NX_Q5TBE3"/>
<dbReference type="OpenTargets" id="ENSG00000187753"/>
<dbReference type="PharmGKB" id="PA134962664"/>
<dbReference type="VEuPathDB" id="HostDB:ENSG00000187753"/>
<dbReference type="eggNOG" id="ENOG502TJJH">
    <property type="taxonomic scope" value="Eukaryota"/>
</dbReference>
<dbReference type="GeneTree" id="ENSGT00940000164155"/>
<dbReference type="HOGENOM" id="CLU_180164_0_0_1"/>
<dbReference type="InParanoid" id="Q5TBE3"/>
<dbReference type="OMA" id="RQTVHGS"/>
<dbReference type="OrthoDB" id="9945674at2759"/>
<dbReference type="PAN-GO" id="Q5TBE3">
    <property type="GO annotations" value="0 GO annotations based on evolutionary models"/>
</dbReference>
<dbReference type="PhylomeDB" id="Q5TBE3"/>
<dbReference type="PathwayCommons" id="Q5TBE3"/>
<dbReference type="SignaLink" id="Q5TBE3"/>
<dbReference type="BioGRID-ORCS" id="389766">
    <property type="hits" value="17 hits in 1132 CRISPR screens"/>
</dbReference>
<dbReference type="GenomeRNAi" id="389766"/>
<dbReference type="Pharos" id="Q5TBE3">
    <property type="development level" value="Tdark"/>
</dbReference>
<dbReference type="PRO" id="PR:Q5TBE3"/>
<dbReference type="Proteomes" id="UP000005640">
    <property type="component" value="Chromosome 9"/>
</dbReference>
<dbReference type="RNAct" id="Q5TBE3">
    <property type="molecule type" value="protein"/>
</dbReference>
<dbReference type="Bgee" id="ENSG00000187753">
    <property type="expression patterns" value="Expressed in left testis and 84 other cell types or tissues"/>
</dbReference>
<dbReference type="ExpressionAtlas" id="Q5TBE3">
    <property type="expression patterns" value="baseline and differential"/>
</dbReference>
<dbReference type="InterPro" id="IPR040022">
    <property type="entry name" value="C9orf153-like"/>
</dbReference>
<dbReference type="PANTHER" id="PTHR37353">
    <property type="entry name" value="RIKEN CDNA 4921517D22 GENE"/>
    <property type="match status" value="1"/>
</dbReference>
<dbReference type="PANTHER" id="PTHR37353:SF1">
    <property type="entry name" value="RIKEN CDNA 4921517D22 GENE"/>
    <property type="match status" value="1"/>
</dbReference>
<dbReference type="Pfam" id="PF17673">
    <property type="entry name" value="DUF5532"/>
    <property type="match status" value="1"/>
</dbReference>
<proteinExistence type="evidence at protein level"/>
<protein>
    <recommendedName>
        <fullName>Uncharacterized protein C9orf153</fullName>
    </recommendedName>
</protein>
<organism>
    <name type="scientific">Homo sapiens</name>
    <name type="common">Human</name>
    <dbReference type="NCBI Taxonomy" id="9606"/>
    <lineage>
        <taxon>Eukaryota</taxon>
        <taxon>Metazoa</taxon>
        <taxon>Chordata</taxon>
        <taxon>Craniata</taxon>
        <taxon>Vertebrata</taxon>
        <taxon>Euteleostomi</taxon>
        <taxon>Mammalia</taxon>
        <taxon>Eutheria</taxon>
        <taxon>Euarchontoglires</taxon>
        <taxon>Primates</taxon>
        <taxon>Haplorrhini</taxon>
        <taxon>Catarrhini</taxon>
        <taxon>Hominidae</taxon>
        <taxon>Homo</taxon>
    </lineage>
</organism>
<feature type="chain" id="PRO_0000229730" description="Uncharacterized protein C9orf153">
    <location>
        <begin position="1"/>
        <end position="101"/>
    </location>
</feature>
<feature type="splice variant" id="VSP_017734" description="In isoform 2." evidence="1">
    <original>SVNKMNKPGKHRKTPSPKINK</original>
    <variation>RKTIHESKGSGMEIF</variation>
    <location>
        <begin position="81"/>
        <end position="101"/>
    </location>
</feature>
<sequence length="101" mass="11254">MFLTGDTSPAEDNREATLPQCSLPELYACIENFNKESKKSNLLKMHGISLNEAQEVLARNLNVMSFTRGADVRGDLQPVISVNKMNKPGKHRKTPSPKINK</sequence>
<accession>Q5TBE3</accession>
<accession>Q5TBE4</accession>
<evidence type="ECO:0000303" key="1">
    <source>
    </source>
</evidence>
<keyword id="KW-0025">Alternative splicing</keyword>
<keyword id="KW-1185">Reference proteome</keyword>
<name>CI153_HUMAN</name>
<comment type="interaction">
    <interactant intactId="EBI-12159293">
        <id>Q5TBE3-2</id>
    </interactant>
    <interactant intactId="EBI-749051">
        <id>Q8IYR0</id>
        <label>CFAP206</label>
    </interactant>
    <organismsDiffer>false</organismsDiffer>
    <experiments>3</experiments>
</comment>
<comment type="alternative products">
    <event type="alternative splicing"/>
    <isoform>
        <id>Q5TBE3-1</id>
        <name>1</name>
        <sequence type="displayed"/>
    </isoform>
    <isoform>
        <id>Q5TBE3-2</id>
        <name>2</name>
        <sequence type="described" ref="VSP_017734"/>
    </isoform>
</comment>
<reference key="1">
    <citation type="journal article" date="2004" name="Nature">
        <title>DNA sequence and analysis of human chromosome 9.</title>
        <authorList>
            <person name="Humphray S.J."/>
            <person name="Oliver K."/>
            <person name="Hunt A.R."/>
            <person name="Plumb R.W."/>
            <person name="Loveland J.E."/>
            <person name="Howe K.L."/>
            <person name="Andrews T.D."/>
            <person name="Searle S."/>
            <person name="Hunt S.E."/>
            <person name="Scott C.E."/>
            <person name="Jones M.C."/>
            <person name="Ainscough R."/>
            <person name="Almeida J.P."/>
            <person name="Ambrose K.D."/>
            <person name="Ashwell R.I.S."/>
            <person name="Babbage A.K."/>
            <person name="Babbage S."/>
            <person name="Bagguley C.L."/>
            <person name="Bailey J."/>
            <person name="Banerjee R."/>
            <person name="Barker D.J."/>
            <person name="Barlow K.F."/>
            <person name="Bates K."/>
            <person name="Beasley H."/>
            <person name="Beasley O."/>
            <person name="Bird C.P."/>
            <person name="Bray-Allen S."/>
            <person name="Brown A.J."/>
            <person name="Brown J.Y."/>
            <person name="Burford D."/>
            <person name="Burrill W."/>
            <person name="Burton J."/>
            <person name="Carder C."/>
            <person name="Carter N.P."/>
            <person name="Chapman J.C."/>
            <person name="Chen Y."/>
            <person name="Clarke G."/>
            <person name="Clark S.Y."/>
            <person name="Clee C.M."/>
            <person name="Clegg S."/>
            <person name="Collier R.E."/>
            <person name="Corby N."/>
            <person name="Crosier M."/>
            <person name="Cummings A.T."/>
            <person name="Davies J."/>
            <person name="Dhami P."/>
            <person name="Dunn M."/>
            <person name="Dutta I."/>
            <person name="Dyer L.W."/>
            <person name="Earthrowl M.E."/>
            <person name="Faulkner L."/>
            <person name="Fleming C.J."/>
            <person name="Frankish A."/>
            <person name="Frankland J.A."/>
            <person name="French L."/>
            <person name="Fricker D.G."/>
            <person name="Garner P."/>
            <person name="Garnett J."/>
            <person name="Ghori J."/>
            <person name="Gilbert J.G.R."/>
            <person name="Glison C."/>
            <person name="Grafham D.V."/>
            <person name="Gribble S."/>
            <person name="Griffiths C."/>
            <person name="Griffiths-Jones S."/>
            <person name="Grocock R."/>
            <person name="Guy J."/>
            <person name="Hall R.E."/>
            <person name="Hammond S."/>
            <person name="Harley J.L."/>
            <person name="Harrison E.S.I."/>
            <person name="Hart E.A."/>
            <person name="Heath P.D."/>
            <person name="Henderson C.D."/>
            <person name="Hopkins B.L."/>
            <person name="Howard P.J."/>
            <person name="Howden P.J."/>
            <person name="Huckle E."/>
            <person name="Johnson C."/>
            <person name="Johnson D."/>
            <person name="Joy A.A."/>
            <person name="Kay M."/>
            <person name="Keenan S."/>
            <person name="Kershaw J.K."/>
            <person name="Kimberley A.M."/>
            <person name="King A."/>
            <person name="Knights A."/>
            <person name="Laird G.K."/>
            <person name="Langford C."/>
            <person name="Lawlor S."/>
            <person name="Leongamornlert D.A."/>
            <person name="Leversha M."/>
            <person name="Lloyd C."/>
            <person name="Lloyd D.M."/>
            <person name="Lovell J."/>
            <person name="Martin S."/>
            <person name="Mashreghi-Mohammadi M."/>
            <person name="Matthews L."/>
            <person name="McLaren S."/>
            <person name="McLay K.E."/>
            <person name="McMurray A."/>
            <person name="Milne S."/>
            <person name="Nickerson T."/>
            <person name="Nisbett J."/>
            <person name="Nordsiek G."/>
            <person name="Pearce A.V."/>
            <person name="Peck A.I."/>
            <person name="Porter K.M."/>
            <person name="Pandian R."/>
            <person name="Pelan S."/>
            <person name="Phillimore B."/>
            <person name="Povey S."/>
            <person name="Ramsey Y."/>
            <person name="Rand V."/>
            <person name="Scharfe M."/>
            <person name="Sehra H.K."/>
            <person name="Shownkeen R."/>
            <person name="Sims S.K."/>
            <person name="Skuce C.D."/>
            <person name="Smith M."/>
            <person name="Steward C.A."/>
            <person name="Swarbreck D."/>
            <person name="Sycamore N."/>
            <person name="Tester J."/>
            <person name="Thorpe A."/>
            <person name="Tracey A."/>
            <person name="Tromans A."/>
            <person name="Thomas D.W."/>
            <person name="Wall M."/>
            <person name="Wallis J.M."/>
            <person name="West A.P."/>
            <person name="Whitehead S.L."/>
            <person name="Willey D.L."/>
            <person name="Williams S.A."/>
            <person name="Wilming L."/>
            <person name="Wray P.W."/>
            <person name="Young L."/>
            <person name="Ashurst J.L."/>
            <person name="Coulson A."/>
            <person name="Blocker H."/>
            <person name="Durbin R.M."/>
            <person name="Sulston J.E."/>
            <person name="Hubbard T."/>
            <person name="Jackson M.J."/>
            <person name="Bentley D.R."/>
            <person name="Beck S."/>
            <person name="Rogers J."/>
            <person name="Dunham I."/>
        </authorList>
    </citation>
    <scope>NUCLEOTIDE SEQUENCE [LARGE SCALE GENOMIC DNA]</scope>
</reference>
<reference key="2">
    <citation type="journal article" date="2004" name="Genome Res.">
        <title>The status, quality, and expansion of the NIH full-length cDNA project: the Mammalian Gene Collection (MGC).</title>
        <authorList>
            <consortium name="The MGC Project Team"/>
        </authorList>
    </citation>
    <scope>NUCLEOTIDE SEQUENCE [LARGE SCALE MRNA] (ISOFORM 2)</scope>
    <source>
        <tissue>Brain</tissue>
    </source>
</reference>
<gene>
    <name type="primary">C9orf153</name>
</gene>